<evidence type="ECO:0000255" key="1">
    <source>
        <dbReference type="HAMAP-Rule" id="MF_00003"/>
    </source>
</evidence>
<name>RBFA_THEAB</name>
<accession>B7IDY7</accession>
<comment type="function">
    <text evidence="1">One of several proteins that assist in the late maturation steps of the functional core of the 30S ribosomal subunit. Associates with free 30S ribosomal subunits (but not with 30S subunits that are part of 70S ribosomes or polysomes). Required for efficient processing of 16S rRNA. May interact with the 5'-terminal helix region of 16S rRNA.</text>
</comment>
<comment type="subunit">
    <text evidence="1">Monomer. Binds 30S ribosomal subunits, but not 50S ribosomal subunits or 70S ribosomes.</text>
</comment>
<comment type="subcellular location">
    <subcellularLocation>
        <location evidence="1">Cytoplasm</location>
    </subcellularLocation>
</comment>
<comment type="similarity">
    <text evidence="1">Belongs to the RbfA family.</text>
</comment>
<organism>
    <name type="scientific">Thermosipho africanus (strain TCF52B)</name>
    <dbReference type="NCBI Taxonomy" id="484019"/>
    <lineage>
        <taxon>Bacteria</taxon>
        <taxon>Thermotogati</taxon>
        <taxon>Thermotogota</taxon>
        <taxon>Thermotogae</taxon>
        <taxon>Thermotogales</taxon>
        <taxon>Fervidobacteriaceae</taxon>
        <taxon>Thermosipho</taxon>
    </lineage>
</organism>
<proteinExistence type="inferred from homology"/>
<sequence length="126" mass="14984">MRPEYRNKKIEAYIRELIAQAIQKIKEPEFEYLKDYIVISRVLISKDRRFADVFVSVIGNSEQRKKAVELLEKYKGYFRTFVAKNVRLYTAPELRFKEDKGIEESVRINKLLDEIMSKEDENGSDN</sequence>
<feature type="chain" id="PRO_1000193273" description="Ribosome-binding factor A">
    <location>
        <begin position="1"/>
        <end position="126"/>
    </location>
</feature>
<keyword id="KW-0963">Cytoplasm</keyword>
<keyword id="KW-1185">Reference proteome</keyword>
<keyword id="KW-0690">Ribosome biogenesis</keyword>
<gene>
    <name evidence="1" type="primary">rbfA</name>
    <name type="ordered locus">THA_1783</name>
</gene>
<dbReference type="EMBL" id="CP001185">
    <property type="protein sequence ID" value="ACJ76214.1"/>
    <property type="molecule type" value="Genomic_DNA"/>
</dbReference>
<dbReference type="RefSeq" id="WP_012580408.1">
    <property type="nucleotide sequence ID" value="NC_011653.1"/>
</dbReference>
<dbReference type="SMR" id="B7IDY7"/>
<dbReference type="STRING" id="484019.THA_1783"/>
<dbReference type="KEGG" id="taf:THA_1783"/>
<dbReference type="eggNOG" id="COG0858">
    <property type="taxonomic scope" value="Bacteria"/>
</dbReference>
<dbReference type="HOGENOM" id="CLU_089475_6_5_0"/>
<dbReference type="OrthoDB" id="46605at2"/>
<dbReference type="Proteomes" id="UP000002453">
    <property type="component" value="Chromosome"/>
</dbReference>
<dbReference type="GO" id="GO:0005829">
    <property type="term" value="C:cytosol"/>
    <property type="evidence" value="ECO:0007669"/>
    <property type="project" value="TreeGrafter"/>
</dbReference>
<dbReference type="GO" id="GO:0043024">
    <property type="term" value="F:ribosomal small subunit binding"/>
    <property type="evidence" value="ECO:0007669"/>
    <property type="project" value="TreeGrafter"/>
</dbReference>
<dbReference type="GO" id="GO:0030490">
    <property type="term" value="P:maturation of SSU-rRNA"/>
    <property type="evidence" value="ECO:0007669"/>
    <property type="project" value="UniProtKB-UniRule"/>
</dbReference>
<dbReference type="Gene3D" id="3.30.300.20">
    <property type="match status" value="1"/>
</dbReference>
<dbReference type="HAMAP" id="MF_00003">
    <property type="entry name" value="RbfA"/>
    <property type="match status" value="1"/>
</dbReference>
<dbReference type="InterPro" id="IPR015946">
    <property type="entry name" value="KH_dom-like_a/b"/>
</dbReference>
<dbReference type="InterPro" id="IPR000238">
    <property type="entry name" value="RbfA"/>
</dbReference>
<dbReference type="InterPro" id="IPR023799">
    <property type="entry name" value="RbfA_dom_sf"/>
</dbReference>
<dbReference type="InterPro" id="IPR020053">
    <property type="entry name" value="Ribosome-bd_factorA_CS"/>
</dbReference>
<dbReference type="NCBIfam" id="TIGR00082">
    <property type="entry name" value="rbfA"/>
    <property type="match status" value="1"/>
</dbReference>
<dbReference type="PANTHER" id="PTHR33515">
    <property type="entry name" value="RIBOSOME-BINDING FACTOR A, CHLOROPLASTIC-RELATED"/>
    <property type="match status" value="1"/>
</dbReference>
<dbReference type="PANTHER" id="PTHR33515:SF1">
    <property type="entry name" value="RIBOSOME-BINDING FACTOR A, CHLOROPLASTIC-RELATED"/>
    <property type="match status" value="1"/>
</dbReference>
<dbReference type="Pfam" id="PF02033">
    <property type="entry name" value="RBFA"/>
    <property type="match status" value="1"/>
</dbReference>
<dbReference type="SUPFAM" id="SSF89919">
    <property type="entry name" value="Ribosome-binding factor A, RbfA"/>
    <property type="match status" value="1"/>
</dbReference>
<dbReference type="PROSITE" id="PS01319">
    <property type="entry name" value="RBFA"/>
    <property type="match status" value="1"/>
</dbReference>
<protein>
    <recommendedName>
        <fullName evidence="1">Ribosome-binding factor A</fullName>
    </recommendedName>
</protein>
<reference key="1">
    <citation type="journal article" date="2009" name="J. Bacteriol.">
        <title>The genome of Thermosipho africanus TCF52B: lateral genetic connections to the Firmicutes and Archaea.</title>
        <authorList>
            <person name="Nesboe C.L."/>
            <person name="Bapteste E."/>
            <person name="Curtis B."/>
            <person name="Dahle H."/>
            <person name="Lopez P."/>
            <person name="Macleod D."/>
            <person name="Dlutek M."/>
            <person name="Bowman S."/>
            <person name="Zhaxybayeva O."/>
            <person name="Birkeland N.-K."/>
            <person name="Doolittle W.F."/>
        </authorList>
    </citation>
    <scope>NUCLEOTIDE SEQUENCE [LARGE SCALE GENOMIC DNA]</scope>
    <source>
        <strain>TCF52B</strain>
    </source>
</reference>